<dbReference type="EMBL" id="CP000227">
    <property type="protein sequence ID" value="ACM13594.1"/>
    <property type="molecule type" value="Genomic_DNA"/>
</dbReference>
<dbReference type="SMR" id="B9ISM3"/>
<dbReference type="KEGG" id="bcq:BCQ_3166"/>
<dbReference type="HOGENOM" id="CLU_106166_1_1_9"/>
<dbReference type="Proteomes" id="UP000000441">
    <property type="component" value="Chromosome"/>
</dbReference>
<dbReference type="GO" id="GO:0005886">
    <property type="term" value="C:plasma membrane"/>
    <property type="evidence" value="ECO:0007669"/>
    <property type="project" value="UniProtKB-SubCell"/>
</dbReference>
<dbReference type="CDD" id="cd16381">
    <property type="entry name" value="YitT_C_like_1"/>
    <property type="match status" value="1"/>
</dbReference>
<dbReference type="HAMAP" id="MF_01515">
    <property type="entry name" value="UPF0316"/>
    <property type="match status" value="1"/>
</dbReference>
<dbReference type="InterPro" id="IPR019264">
    <property type="entry name" value="DUF2179"/>
</dbReference>
<dbReference type="InterPro" id="IPR044035">
    <property type="entry name" value="DUF5698"/>
</dbReference>
<dbReference type="InterPro" id="IPR022930">
    <property type="entry name" value="UPF0316"/>
</dbReference>
<dbReference type="NCBIfam" id="NF003193">
    <property type="entry name" value="PRK04164.1-4"/>
    <property type="match status" value="1"/>
</dbReference>
<dbReference type="NCBIfam" id="NF003194">
    <property type="entry name" value="PRK04164.1-5"/>
    <property type="match status" value="1"/>
</dbReference>
<dbReference type="PANTHER" id="PTHR40060">
    <property type="entry name" value="UPF0316 PROTEIN YEBE"/>
    <property type="match status" value="1"/>
</dbReference>
<dbReference type="PANTHER" id="PTHR40060:SF1">
    <property type="entry name" value="UPF0316 PROTEIN YEBE"/>
    <property type="match status" value="1"/>
</dbReference>
<dbReference type="Pfam" id="PF10035">
    <property type="entry name" value="DUF2179"/>
    <property type="match status" value="1"/>
</dbReference>
<dbReference type="Pfam" id="PF18955">
    <property type="entry name" value="DUF5698"/>
    <property type="match status" value="1"/>
</dbReference>
<gene>
    <name type="ordered locus">BCQ_3166</name>
</gene>
<sequence>MLQALLIFVLQIIYVPILTIRTILLVKNQTRSAAAVGLLEGAIYIVSLGIVFQDLSNWMNIVAYVIGFSAGLLLGGYIENKLAIGYITYQVSLLDRCNELVDELRHSGFGVTVFEGEGINSIRYRLDIVAKRSREKELLEIINEIAPKAFMSSYEIRSFKGGYLTKAMKKRALMKKKDHHAS</sequence>
<name>Y3166_BACCQ</name>
<reference key="1">
    <citation type="journal article" date="2009" name="J. Bacteriol.">
        <title>Complete genome sequence of the extremophilic Bacillus cereus strain Q1 with industrial applications.</title>
        <authorList>
            <person name="Xiong Z."/>
            <person name="Jiang Y."/>
            <person name="Qi D."/>
            <person name="Lu H."/>
            <person name="Yang F."/>
            <person name="Yang J."/>
            <person name="Chen L."/>
            <person name="Sun L."/>
            <person name="Xu X."/>
            <person name="Xue Y."/>
            <person name="Zhu Y."/>
            <person name="Jin Q."/>
        </authorList>
    </citation>
    <scope>NUCLEOTIDE SEQUENCE [LARGE SCALE GENOMIC DNA]</scope>
    <source>
        <strain>Q1</strain>
    </source>
</reference>
<feature type="chain" id="PRO_1000185070" description="UPF0316 protein BCQ_3166">
    <location>
        <begin position="1"/>
        <end position="182"/>
    </location>
</feature>
<feature type="transmembrane region" description="Helical" evidence="1">
    <location>
        <begin position="6"/>
        <end position="26"/>
    </location>
</feature>
<feature type="transmembrane region" description="Helical" evidence="1">
    <location>
        <begin position="32"/>
        <end position="52"/>
    </location>
</feature>
<feature type="transmembrane region" description="Helical" evidence="1">
    <location>
        <begin position="58"/>
        <end position="78"/>
    </location>
</feature>
<accession>B9ISM3</accession>
<comment type="subcellular location">
    <subcellularLocation>
        <location evidence="1">Cell membrane</location>
        <topology evidence="1">Multi-pass membrane protein</topology>
    </subcellularLocation>
</comment>
<comment type="similarity">
    <text evidence="1">Belongs to the UPF0316 family.</text>
</comment>
<keyword id="KW-1003">Cell membrane</keyword>
<keyword id="KW-0472">Membrane</keyword>
<keyword id="KW-0812">Transmembrane</keyword>
<keyword id="KW-1133">Transmembrane helix</keyword>
<proteinExistence type="inferred from homology"/>
<protein>
    <recommendedName>
        <fullName evidence="1">UPF0316 protein BCQ_3166</fullName>
    </recommendedName>
</protein>
<evidence type="ECO:0000255" key="1">
    <source>
        <dbReference type="HAMAP-Rule" id="MF_01515"/>
    </source>
</evidence>
<organism>
    <name type="scientific">Bacillus cereus (strain Q1)</name>
    <dbReference type="NCBI Taxonomy" id="361100"/>
    <lineage>
        <taxon>Bacteria</taxon>
        <taxon>Bacillati</taxon>
        <taxon>Bacillota</taxon>
        <taxon>Bacilli</taxon>
        <taxon>Bacillales</taxon>
        <taxon>Bacillaceae</taxon>
        <taxon>Bacillus</taxon>
        <taxon>Bacillus cereus group</taxon>
    </lineage>
</organism>